<evidence type="ECO:0000250" key="1">
    <source>
        <dbReference type="UniProtKB" id="A6ZQI5"/>
    </source>
</evidence>
<evidence type="ECO:0000250" key="2">
    <source>
        <dbReference type="UniProtKB" id="P47008"/>
    </source>
</evidence>
<evidence type="ECO:0000255" key="3">
    <source>
        <dbReference type="PROSITE-ProRule" id="PRU00056"/>
    </source>
</evidence>
<evidence type="ECO:0000256" key="4">
    <source>
        <dbReference type="SAM" id="MobiDB-lite"/>
    </source>
</evidence>
<evidence type="ECO:0000305" key="5"/>
<keyword id="KW-0963">Cytoplasm</keyword>
<keyword id="KW-0256">Endoplasmic reticulum</keyword>
<keyword id="KW-0349">Heme</keyword>
<keyword id="KW-0408">Iron</keyword>
<keyword id="KW-0445">Lipid transport</keyword>
<keyword id="KW-0472">Membrane</keyword>
<keyword id="KW-0479">Metal-binding</keyword>
<keyword id="KW-0492">Microsome</keyword>
<keyword id="KW-1185">Reference proteome</keyword>
<keyword id="KW-0813">Transport</keyword>
<proteinExistence type="inferred from homology"/>
<gene>
    <name type="primary">SFH5</name>
    <name type="ORF">LELG_00368</name>
</gene>
<sequence>MSEVDEGIQNLSIEKADAGATATATATATTAEKHNQALNSTLKTGLDKSVESQTANSAGSSPTSATSSSNNPHYDVKSTIKSTKLNDEQAQKLTKLISSVPDILKQTKNPAYDEIFGYRINSDGLEYVDIPKRNEILLKFLAADNYDLDLATKRLIATFNWRNEFQPLHAAFDEKFHQELNELGVITQFASGNDNLHVITWNLYGNLKSPKKIFQKFGEGADDGQREGLAKSSSNSNSSSSSSSSGNNRGKNLPGSQFLRWRIGLMEKALQLVDFTDSKNHKIAQIHDYNNVSMFRIDPGMKAATKEIIEIFGQNYPELLSTKYFINVPLIMGWVFTFFKTIGVISAETLKKFQVLNHGDLKETLPKQELPESYGGVKSAKGDPKRSLFDLDVSESIKLTKYGQVVLQRLGDEEIAHNNDEVE</sequence>
<feature type="chain" id="PRO_0000324981" description="Phosphatidylinositol transfer protein SFH5">
    <location>
        <begin position="1"/>
        <end position="423"/>
    </location>
</feature>
<feature type="domain" description="CRAL-TRIO" evidence="3">
    <location>
        <begin position="217"/>
        <end position="382"/>
    </location>
</feature>
<feature type="region of interest" description="Disordered" evidence="4">
    <location>
        <begin position="1"/>
        <end position="76"/>
    </location>
</feature>
<feature type="region of interest" description="Disordered" evidence="4">
    <location>
        <begin position="221"/>
        <end position="253"/>
    </location>
</feature>
<feature type="compositionally biased region" description="Low complexity" evidence="4">
    <location>
        <begin position="20"/>
        <end position="30"/>
    </location>
</feature>
<feature type="compositionally biased region" description="Low complexity" evidence="4">
    <location>
        <begin position="54"/>
        <end position="72"/>
    </location>
</feature>
<feature type="compositionally biased region" description="Low complexity" evidence="4">
    <location>
        <begin position="232"/>
        <end position="248"/>
    </location>
</feature>
<feature type="binding site" evidence="1">
    <location>
        <position position="204"/>
    </location>
    <ligand>
        <name>heme</name>
        <dbReference type="ChEBI" id="CHEBI:30413"/>
    </ligand>
</feature>
<feature type="binding site" evidence="1">
    <location>
        <position position="262"/>
    </location>
    <ligand>
        <name>heme</name>
        <dbReference type="ChEBI" id="CHEBI:30413"/>
    </ligand>
</feature>
<feature type="binding site" evidence="1">
    <location>
        <position position="287"/>
    </location>
    <ligand>
        <name>heme</name>
        <dbReference type="ChEBI" id="CHEBI:30413"/>
    </ligand>
</feature>
<feature type="binding site" description="proximal binding residue" evidence="1">
    <location>
        <position position="289"/>
    </location>
    <ligand>
        <name>heme</name>
        <dbReference type="ChEBI" id="CHEBI:30413"/>
    </ligand>
    <ligandPart>
        <name>Fe</name>
        <dbReference type="ChEBI" id="CHEBI:18248"/>
    </ligandPart>
</feature>
<feature type="binding site" evidence="1">
    <location>
        <position position="323"/>
    </location>
    <ligand>
        <name>heme</name>
        <dbReference type="ChEBI" id="CHEBI:30413"/>
    </ligand>
</feature>
<comment type="function">
    <text evidence="2">Non-classical phosphatidylinositol (PtdIns) transfer protein (PITP), which exhibits PtdIns-binding/transfer activity in the absence of detectable PtdCho-binding/transfer activity. Regulates PtdIns(4,5)P2 homeostasis at the plasma membrane. Heme-binding protein that may play a role in organic oxidant-induced stress responses.</text>
</comment>
<comment type="catalytic activity">
    <reaction evidence="2">
        <text>a 1,2-diacyl-sn-glycero-3-phospho-(1D-myo-inositol)(in) = a 1,2-diacyl-sn-glycero-3-phospho-(1D-myo-inositol)(out)</text>
        <dbReference type="Rhea" id="RHEA:38691"/>
        <dbReference type="ChEBI" id="CHEBI:57880"/>
    </reaction>
    <physiologicalReaction direction="left-to-right" evidence="2">
        <dbReference type="Rhea" id="RHEA:38692"/>
    </physiologicalReaction>
</comment>
<comment type="cofactor">
    <cofactor evidence="1">
        <name>heme b</name>
        <dbReference type="ChEBI" id="CHEBI:60344"/>
    </cofactor>
</comment>
<comment type="subcellular location">
    <subcellularLocation>
        <location evidence="2">Cytoplasm</location>
    </subcellularLocation>
    <subcellularLocation>
        <location evidence="2">Endoplasmic reticulum membrane</location>
        <topology evidence="2">Peripheral membrane protein</topology>
    </subcellularLocation>
    <subcellularLocation>
        <location evidence="2">Microsome membrane</location>
        <topology evidence="2">Peripheral membrane protein</topology>
    </subcellularLocation>
</comment>
<comment type="similarity">
    <text evidence="5">Belongs to the SFH5 family.</text>
</comment>
<name>SFH5_LODEL</name>
<protein>
    <recommendedName>
        <fullName>Phosphatidylinositol transfer protein SFH5</fullName>
        <shortName>PITP SFH5</shortName>
    </recommendedName>
</protein>
<accession>A5DSN2</accession>
<dbReference type="EMBL" id="CH981524">
    <property type="protein sequence ID" value="EDK42190.1"/>
    <property type="molecule type" value="Genomic_DNA"/>
</dbReference>
<dbReference type="RefSeq" id="XP_001527848.1">
    <property type="nucleotide sequence ID" value="XM_001527798.1"/>
</dbReference>
<dbReference type="SMR" id="A5DSN2"/>
<dbReference type="FunCoup" id="A5DSN2">
    <property type="interactions" value="37"/>
</dbReference>
<dbReference type="STRING" id="379508.A5DSN2"/>
<dbReference type="GeneID" id="5235570"/>
<dbReference type="KEGG" id="lel:PVL30_000360"/>
<dbReference type="VEuPathDB" id="FungiDB:LELG_00368"/>
<dbReference type="eggNOG" id="KOG1471">
    <property type="taxonomic scope" value="Eukaryota"/>
</dbReference>
<dbReference type="HOGENOM" id="CLU_045138_0_1_1"/>
<dbReference type="InParanoid" id="A5DSN2"/>
<dbReference type="OMA" id="MVQIHDY"/>
<dbReference type="OrthoDB" id="75724at2759"/>
<dbReference type="Proteomes" id="UP000001996">
    <property type="component" value="Unassembled WGS sequence"/>
</dbReference>
<dbReference type="GO" id="GO:0032541">
    <property type="term" value="C:cortical endoplasmic reticulum"/>
    <property type="evidence" value="ECO:0007669"/>
    <property type="project" value="TreeGrafter"/>
</dbReference>
<dbReference type="GO" id="GO:0005829">
    <property type="term" value="C:cytosol"/>
    <property type="evidence" value="ECO:0007669"/>
    <property type="project" value="TreeGrafter"/>
</dbReference>
<dbReference type="GO" id="GO:0005789">
    <property type="term" value="C:endoplasmic reticulum membrane"/>
    <property type="evidence" value="ECO:0007669"/>
    <property type="project" value="UniProtKB-SubCell"/>
</dbReference>
<dbReference type="GO" id="GO:0005886">
    <property type="term" value="C:plasma membrane"/>
    <property type="evidence" value="ECO:0007669"/>
    <property type="project" value="TreeGrafter"/>
</dbReference>
<dbReference type="GO" id="GO:0046872">
    <property type="term" value="F:metal ion binding"/>
    <property type="evidence" value="ECO:0007669"/>
    <property type="project" value="UniProtKB-KW"/>
</dbReference>
<dbReference type="GO" id="GO:0008526">
    <property type="term" value="F:phosphatidylinositol transfer activity"/>
    <property type="evidence" value="ECO:0007669"/>
    <property type="project" value="InterPro"/>
</dbReference>
<dbReference type="GO" id="GO:0043001">
    <property type="term" value="P:Golgi to plasma membrane protein transport"/>
    <property type="evidence" value="ECO:0007669"/>
    <property type="project" value="TreeGrafter"/>
</dbReference>
<dbReference type="GO" id="GO:0017157">
    <property type="term" value="P:regulation of exocytosis"/>
    <property type="evidence" value="ECO:0007669"/>
    <property type="project" value="TreeGrafter"/>
</dbReference>
<dbReference type="CDD" id="cd00170">
    <property type="entry name" value="SEC14"/>
    <property type="match status" value="1"/>
</dbReference>
<dbReference type="Gene3D" id="3.40.525.10">
    <property type="entry name" value="CRAL-TRIO lipid binding domain"/>
    <property type="match status" value="1"/>
</dbReference>
<dbReference type="InterPro" id="IPR001251">
    <property type="entry name" value="CRAL-TRIO_dom"/>
</dbReference>
<dbReference type="InterPro" id="IPR036865">
    <property type="entry name" value="CRAL-TRIO_dom_sf"/>
</dbReference>
<dbReference type="InterPro" id="IPR036273">
    <property type="entry name" value="CRAL/TRIO_N_dom_sf"/>
</dbReference>
<dbReference type="InterPro" id="IPR042938">
    <property type="entry name" value="Sfh5"/>
</dbReference>
<dbReference type="PANTHER" id="PTHR47669">
    <property type="entry name" value="PHOSPHATIDYLINOSITOL TRANSFER PROTEIN SFH5"/>
    <property type="match status" value="1"/>
</dbReference>
<dbReference type="PANTHER" id="PTHR47669:SF1">
    <property type="entry name" value="PHOSPHATIDYLINOSITOL TRANSFER PROTEIN SFH5"/>
    <property type="match status" value="1"/>
</dbReference>
<dbReference type="Pfam" id="PF00650">
    <property type="entry name" value="CRAL_TRIO"/>
    <property type="match status" value="1"/>
</dbReference>
<dbReference type="SMART" id="SM00516">
    <property type="entry name" value="SEC14"/>
    <property type="match status" value="1"/>
</dbReference>
<dbReference type="SUPFAM" id="SSF52087">
    <property type="entry name" value="CRAL/TRIO domain"/>
    <property type="match status" value="1"/>
</dbReference>
<dbReference type="SUPFAM" id="SSF46938">
    <property type="entry name" value="CRAL/TRIO N-terminal domain"/>
    <property type="match status" value="1"/>
</dbReference>
<dbReference type="PROSITE" id="PS50191">
    <property type="entry name" value="CRAL_TRIO"/>
    <property type="match status" value="1"/>
</dbReference>
<organism>
    <name type="scientific">Lodderomyces elongisporus (strain ATCC 11503 / CBS 2605 / JCM 1781 / NBRC 1676 / NRRL YB-4239)</name>
    <name type="common">Yeast</name>
    <name type="synonym">Saccharomyces elongisporus</name>
    <dbReference type="NCBI Taxonomy" id="379508"/>
    <lineage>
        <taxon>Eukaryota</taxon>
        <taxon>Fungi</taxon>
        <taxon>Dikarya</taxon>
        <taxon>Ascomycota</taxon>
        <taxon>Saccharomycotina</taxon>
        <taxon>Pichiomycetes</taxon>
        <taxon>Debaryomycetaceae</taxon>
        <taxon>Candida/Lodderomyces clade</taxon>
        <taxon>Lodderomyces</taxon>
    </lineage>
</organism>
<reference key="1">
    <citation type="journal article" date="2009" name="Nature">
        <title>Evolution of pathogenicity and sexual reproduction in eight Candida genomes.</title>
        <authorList>
            <person name="Butler G."/>
            <person name="Rasmussen M.D."/>
            <person name="Lin M.F."/>
            <person name="Santos M.A.S."/>
            <person name="Sakthikumar S."/>
            <person name="Munro C.A."/>
            <person name="Rheinbay E."/>
            <person name="Grabherr M."/>
            <person name="Forche A."/>
            <person name="Reedy J.L."/>
            <person name="Agrafioti I."/>
            <person name="Arnaud M.B."/>
            <person name="Bates S."/>
            <person name="Brown A.J.P."/>
            <person name="Brunke S."/>
            <person name="Costanzo M.C."/>
            <person name="Fitzpatrick D.A."/>
            <person name="de Groot P.W.J."/>
            <person name="Harris D."/>
            <person name="Hoyer L.L."/>
            <person name="Hube B."/>
            <person name="Klis F.M."/>
            <person name="Kodira C."/>
            <person name="Lennard N."/>
            <person name="Logue M.E."/>
            <person name="Martin R."/>
            <person name="Neiman A.M."/>
            <person name="Nikolaou E."/>
            <person name="Quail M.A."/>
            <person name="Quinn J."/>
            <person name="Santos M.C."/>
            <person name="Schmitzberger F.F."/>
            <person name="Sherlock G."/>
            <person name="Shah P."/>
            <person name="Silverstein K.A.T."/>
            <person name="Skrzypek M.S."/>
            <person name="Soll D."/>
            <person name="Staggs R."/>
            <person name="Stansfield I."/>
            <person name="Stumpf M.P.H."/>
            <person name="Sudbery P.E."/>
            <person name="Srikantha T."/>
            <person name="Zeng Q."/>
            <person name="Berman J."/>
            <person name="Berriman M."/>
            <person name="Heitman J."/>
            <person name="Gow N.A.R."/>
            <person name="Lorenz M.C."/>
            <person name="Birren B.W."/>
            <person name="Kellis M."/>
            <person name="Cuomo C.A."/>
        </authorList>
    </citation>
    <scope>NUCLEOTIDE SEQUENCE [LARGE SCALE GENOMIC DNA]</scope>
    <source>
        <strain>ATCC 11503 / BCRC 21390 / CBS 2605 / JCM 1781 / NBRC 1676 / NRRL YB-4239</strain>
    </source>
</reference>